<dbReference type="EMBL" id="AB029493">
    <property type="protein sequence ID" value="BAA90478.1"/>
    <property type="molecule type" value="mRNA"/>
</dbReference>
<dbReference type="EMBL" id="AK019487">
    <property type="protein sequence ID" value="BAB31754.1"/>
    <property type="molecule type" value="mRNA"/>
</dbReference>
<dbReference type="EMBL" id="AK044858">
    <property type="protein sequence ID" value="BAC32123.1"/>
    <property type="molecule type" value="mRNA"/>
</dbReference>
<dbReference type="EMBL" id="AK045542">
    <property type="protein sequence ID" value="BAC32413.1"/>
    <property type="status" value="ALT_FRAME"/>
    <property type="molecule type" value="mRNA"/>
</dbReference>
<dbReference type="EMBL" id="AK051401">
    <property type="protein sequence ID" value="BAC34628.1"/>
    <property type="molecule type" value="mRNA"/>
</dbReference>
<dbReference type="EMBL" id="AK162418">
    <property type="protein sequence ID" value="BAE36904.1"/>
    <property type="molecule type" value="mRNA"/>
</dbReference>
<dbReference type="EMBL" id="BC055734">
    <property type="protein sequence ID" value="AAH55734.1"/>
    <property type="molecule type" value="mRNA"/>
</dbReference>
<dbReference type="CCDS" id="CCDS40011.1">
    <molecule id="Q9JMG7-1"/>
</dbReference>
<dbReference type="RefSeq" id="NP_038914.2">
    <molecule id="Q9JMG7-1"/>
    <property type="nucleotide sequence ID" value="NM_013886.4"/>
</dbReference>
<dbReference type="PDB" id="1N27">
    <property type="method" value="NMR"/>
    <property type="chains" value="A=8-90"/>
</dbReference>
<dbReference type="PDBsum" id="1N27"/>
<dbReference type="BMRB" id="Q9JMG7"/>
<dbReference type="SMR" id="Q9JMG7"/>
<dbReference type="BioGRID" id="205940">
    <property type="interactions" value="6"/>
</dbReference>
<dbReference type="FunCoup" id="Q9JMG7">
    <property type="interactions" value="3157"/>
</dbReference>
<dbReference type="IntAct" id="Q9JMG7">
    <property type="interactions" value="1"/>
</dbReference>
<dbReference type="MINT" id="Q9JMG7"/>
<dbReference type="STRING" id="10090.ENSMUSP00000102926"/>
<dbReference type="iPTMnet" id="Q9JMG7"/>
<dbReference type="PhosphoSitePlus" id="Q9JMG7"/>
<dbReference type="jPOST" id="Q9JMG7"/>
<dbReference type="PaxDb" id="10090-ENSMUSP00000102926"/>
<dbReference type="PeptideAtlas" id="Q9JMG7"/>
<dbReference type="ProteomicsDB" id="269650">
    <molecule id="Q9JMG7-1"/>
</dbReference>
<dbReference type="ProteomicsDB" id="269651">
    <molecule id="Q9JMG7-2"/>
</dbReference>
<dbReference type="Pumba" id="Q9JMG7"/>
<dbReference type="Antibodypedia" id="28189">
    <property type="antibodies" value="196 antibodies from 29 providers"/>
</dbReference>
<dbReference type="DNASU" id="29877"/>
<dbReference type="Ensembl" id="ENSMUST00000026094.6">
    <molecule id="Q9JMG7-2"/>
    <property type="protein sequence ID" value="ENSMUSP00000026094.6"/>
    <property type="gene ID" value="ENSMUSG00000025104.14"/>
</dbReference>
<dbReference type="Ensembl" id="ENSMUST00000107305.8">
    <molecule id="Q9JMG7-1"/>
    <property type="protein sequence ID" value="ENSMUSP00000102926.2"/>
    <property type="gene ID" value="ENSMUSG00000025104.14"/>
</dbReference>
<dbReference type="GeneID" id="29877"/>
<dbReference type="KEGG" id="mmu:29877"/>
<dbReference type="UCSC" id="uc009icr.1">
    <molecule id="Q9JMG7-1"/>
    <property type="organism name" value="mouse"/>
</dbReference>
<dbReference type="UCSC" id="uc009ics.1">
    <molecule id="Q9JMG7-2"/>
    <property type="organism name" value="mouse"/>
</dbReference>
<dbReference type="AGR" id="MGI:1352760"/>
<dbReference type="CTD" id="50810"/>
<dbReference type="MGI" id="MGI:1352760">
    <property type="gene designation" value="Hdgfl3"/>
</dbReference>
<dbReference type="VEuPathDB" id="HostDB:ENSMUSG00000025104"/>
<dbReference type="eggNOG" id="KOG1904">
    <property type="taxonomic scope" value="Eukaryota"/>
</dbReference>
<dbReference type="GeneTree" id="ENSGT00940000153942"/>
<dbReference type="HOGENOM" id="CLU_090867_1_0_1"/>
<dbReference type="InParanoid" id="Q9JMG7"/>
<dbReference type="OMA" id="THETXAI"/>
<dbReference type="OrthoDB" id="86800at9989"/>
<dbReference type="PhylomeDB" id="Q9JMG7"/>
<dbReference type="TreeFam" id="TF105385"/>
<dbReference type="BioGRID-ORCS" id="29877">
    <property type="hits" value="1 hit in 80 CRISPR screens"/>
</dbReference>
<dbReference type="ChiTaRS" id="Hdgfl3">
    <property type="organism name" value="mouse"/>
</dbReference>
<dbReference type="EvolutionaryTrace" id="Q9JMG7"/>
<dbReference type="PRO" id="PR:Q9JMG7"/>
<dbReference type="Proteomes" id="UP000000589">
    <property type="component" value="Chromosome 7"/>
</dbReference>
<dbReference type="RNAct" id="Q9JMG7">
    <property type="molecule type" value="protein"/>
</dbReference>
<dbReference type="Bgee" id="ENSMUSG00000025104">
    <property type="expression patterns" value="Expressed in rostral migratory stream and 241 other cell types or tissues"/>
</dbReference>
<dbReference type="GO" id="GO:0005737">
    <property type="term" value="C:cytoplasm"/>
    <property type="evidence" value="ECO:0000314"/>
    <property type="project" value="MGI"/>
</dbReference>
<dbReference type="GO" id="GO:0005829">
    <property type="term" value="C:cytosol"/>
    <property type="evidence" value="ECO:0000314"/>
    <property type="project" value="UniProtKB"/>
</dbReference>
<dbReference type="GO" id="GO:0005654">
    <property type="term" value="C:nucleoplasm"/>
    <property type="evidence" value="ECO:0007669"/>
    <property type="project" value="Ensembl"/>
</dbReference>
<dbReference type="GO" id="GO:0005634">
    <property type="term" value="C:nucleus"/>
    <property type="evidence" value="ECO:0000314"/>
    <property type="project" value="UniProtKB"/>
</dbReference>
<dbReference type="GO" id="GO:0003682">
    <property type="term" value="F:chromatin binding"/>
    <property type="evidence" value="ECO:0000303"/>
    <property type="project" value="UniProtKB"/>
</dbReference>
<dbReference type="GO" id="GO:0008083">
    <property type="term" value="F:growth factor activity"/>
    <property type="evidence" value="ECO:0007669"/>
    <property type="project" value="UniProtKB-KW"/>
</dbReference>
<dbReference type="GO" id="GO:0008017">
    <property type="term" value="F:microtubule binding"/>
    <property type="evidence" value="ECO:0000314"/>
    <property type="project" value="UniProtKB"/>
</dbReference>
<dbReference type="GO" id="GO:0015631">
    <property type="term" value="F:tubulin binding"/>
    <property type="evidence" value="ECO:0000314"/>
    <property type="project" value="UniProtKB"/>
</dbReference>
<dbReference type="GO" id="GO:0046785">
    <property type="term" value="P:microtubule polymerization"/>
    <property type="evidence" value="ECO:0000314"/>
    <property type="project" value="UniProtKB"/>
</dbReference>
<dbReference type="GO" id="GO:0007026">
    <property type="term" value="P:negative regulation of microtubule depolymerization"/>
    <property type="evidence" value="ECO:0000314"/>
    <property type="project" value="UniProtKB"/>
</dbReference>
<dbReference type="GO" id="GO:0031175">
    <property type="term" value="P:neuron projection development"/>
    <property type="evidence" value="ECO:0000315"/>
    <property type="project" value="UniProtKB"/>
</dbReference>
<dbReference type="CDD" id="cd20150">
    <property type="entry name" value="PWWP_HDGFL3"/>
    <property type="match status" value="1"/>
</dbReference>
<dbReference type="FunFam" id="2.30.30.140:FF:000017">
    <property type="entry name" value="hepatoma-derived growth factor isoform X1"/>
    <property type="match status" value="1"/>
</dbReference>
<dbReference type="Gene3D" id="2.30.30.140">
    <property type="match status" value="1"/>
</dbReference>
<dbReference type="IDEAL" id="IID50182"/>
<dbReference type="InterPro" id="IPR000313">
    <property type="entry name" value="PWWP_dom"/>
</dbReference>
<dbReference type="PANTHER" id="PTHR12550:SF82">
    <property type="entry name" value="HDGF LIKE 3"/>
    <property type="match status" value="1"/>
</dbReference>
<dbReference type="PANTHER" id="PTHR12550">
    <property type="entry name" value="HEPATOMA-DERIVED GROWTH FACTOR-RELATED"/>
    <property type="match status" value="1"/>
</dbReference>
<dbReference type="Pfam" id="PF00855">
    <property type="entry name" value="PWWP"/>
    <property type="match status" value="1"/>
</dbReference>
<dbReference type="SMART" id="SM00293">
    <property type="entry name" value="PWWP"/>
    <property type="match status" value="1"/>
</dbReference>
<dbReference type="SUPFAM" id="SSF63748">
    <property type="entry name" value="Tudor/PWWP/MBT"/>
    <property type="match status" value="1"/>
</dbReference>
<dbReference type="PROSITE" id="PS50812">
    <property type="entry name" value="PWWP"/>
    <property type="match status" value="1"/>
</dbReference>
<comment type="function">
    <text evidence="1">Enhances DNA synthesis and may play a role in cell proliferation.</text>
</comment>
<comment type="subcellular location">
    <subcellularLocation>
        <location evidence="1">Nucleus</location>
    </subcellularLocation>
</comment>
<comment type="alternative products">
    <event type="alternative splicing"/>
    <isoform>
        <id>Q9JMG7-1</id>
        <name>1</name>
        <sequence type="displayed"/>
    </isoform>
    <isoform>
        <id>Q9JMG7-2</id>
        <name>2</name>
        <sequence type="described" ref="VSP_014188"/>
    </isoform>
</comment>
<comment type="similarity">
    <text evidence="7">Belongs to the HDGF family.</text>
</comment>
<comment type="sequence caution" evidence="7">
    <conflict type="frameshift">
        <sequence resource="EMBL-CDS" id="BAC32413"/>
    </conflict>
</comment>
<reference key="1">
    <citation type="journal article" date="1999" name="Biochem. Biophys. Res. Commun.">
        <title>A new member of a hepatoma-derived growth factor gene family can translocate to the nucleus.</title>
        <authorList>
            <person name="Ikegame K."/>
            <person name="Yamamoto M."/>
            <person name="Kishima Y."/>
            <person name="Enomoto H."/>
            <person name="Yoshida K."/>
            <person name="Suemura M."/>
            <person name="Kishimoto T."/>
            <person name="Nakamura H."/>
        </authorList>
    </citation>
    <scope>NUCLEOTIDE SEQUENCE [MRNA] (ISOFORM 1)</scope>
    <source>
        <tissue>Testis</tissue>
    </source>
</reference>
<reference key="2">
    <citation type="journal article" date="2005" name="Science">
        <title>The transcriptional landscape of the mammalian genome.</title>
        <authorList>
            <person name="Carninci P."/>
            <person name="Kasukawa T."/>
            <person name="Katayama S."/>
            <person name="Gough J."/>
            <person name="Frith M.C."/>
            <person name="Maeda N."/>
            <person name="Oyama R."/>
            <person name="Ravasi T."/>
            <person name="Lenhard B."/>
            <person name="Wells C."/>
            <person name="Kodzius R."/>
            <person name="Shimokawa K."/>
            <person name="Bajic V.B."/>
            <person name="Brenner S.E."/>
            <person name="Batalov S."/>
            <person name="Forrest A.R."/>
            <person name="Zavolan M."/>
            <person name="Davis M.J."/>
            <person name="Wilming L.G."/>
            <person name="Aidinis V."/>
            <person name="Allen J.E."/>
            <person name="Ambesi-Impiombato A."/>
            <person name="Apweiler R."/>
            <person name="Aturaliya R.N."/>
            <person name="Bailey T.L."/>
            <person name="Bansal M."/>
            <person name="Baxter L."/>
            <person name="Beisel K.W."/>
            <person name="Bersano T."/>
            <person name="Bono H."/>
            <person name="Chalk A.M."/>
            <person name="Chiu K.P."/>
            <person name="Choudhary V."/>
            <person name="Christoffels A."/>
            <person name="Clutterbuck D.R."/>
            <person name="Crowe M.L."/>
            <person name="Dalla E."/>
            <person name="Dalrymple B.P."/>
            <person name="de Bono B."/>
            <person name="Della Gatta G."/>
            <person name="di Bernardo D."/>
            <person name="Down T."/>
            <person name="Engstrom P."/>
            <person name="Fagiolini M."/>
            <person name="Faulkner G."/>
            <person name="Fletcher C.F."/>
            <person name="Fukushima T."/>
            <person name="Furuno M."/>
            <person name="Futaki S."/>
            <person name="Gariboldi M."/>
            <person name="Georgii-Hemming P."/>
            <person name="Gingeras T.R."/>
            <person name="Gojobori T."/>
            <person name="Green R.E."/>
            <person name="Gustincich S."/>
            <person name="Harbers M."/>
            <person name="Hayashi Y."/>
            <person name="Hensch T.K."/>
            <person name="Hirokawa N."/>
            <person name="Hill D."/>
            <person name="Huminiecki L."/>
            <person name="Iacono M."/>
            <person name="Ikeo K."/>
            <person name="Iwama A."/>
            <person name="Ishikawa T."/>
            <person name="Jakt M."/>
            <person name="Kanapin A."/>
            <person name="Katoh M."/>
            <person name="Kawasawa Y."/>
            <person name="Kelso J."/>
            <person name="Kitamura H."/>
            <person name="Kitano H."/>
            <person name="Kollias G."/>
            <person name="Krishnan S.P."/>
            <person name="Kruger A."/>
            <person name="Kummerfeld S.K."/>
            <person name="Kurochkin I.V."/>
            <person name="Lareau L.F."/>
            <person name="Lazarevic D."/>
            <person name="Lipovich L."/>
            <person name="Liu J."/>
            <person name="Liuni S."/>
            <person name="McWilliam S."/>
            <person name="Madan Babu M."/>
            <person name="Madera M."/>
            <person name="Marchionni L."/>
            <person name="Matsuda H."/>
            <person name="Matsuzawa S."/>
            <person name="Miki H."/>
            <person name="Mignone F."/>
            <person name="Miyake S."/>
            <person name="Morris K."/>
            <person name="Mottagui-Tabar S."/>
            <person name="Mulder N."/>
            <person name="Nakano N."/>
            <person name="Nakauchi H."/>
            <person name="Ng P."/>
            <person name="Nilsson R."/>
            <person name="Nishiguchi S."/>
            <person name="Nishikawa S."/>
            <person name="Nori F."/>
            <person name="Ohara O."/>
            <person name="Okazaki Y."/>
            <person name="Orlando V."/>
            <person name="Pang K.C."/>
            <person name="Pavan W.J."/>
            <person name="Pavesi G."/>
            <person name="Pesole G."/>
            <person name="Petrovsky N."/>
            <person name="Piazza S."/>
            <person name="Reed J."/>
            <person name="Reid J.F."/>
            <person name="Ring B.Z."/>
            <person name="Ringwald M."/>
            <person name="Rost B."/>
            <person name="Ruan Y."/>
            <person name="Salzberg S.L."/>
            <person name="Sandelin A."/>
            <person name="Schneider C."/>
            <person name="Schoenbach C."/>
            <person name="Sekiguchi K."/>
            <person name="Semple C.A."/>
            <person name="Seno S."/>
            <person name="Sessa L."/>
            <person name="Sheng Y."/>
            <person name="Shibata Y."/>
            <person name="Shimada H."/>
            <person name="Shimada K."/>
            <person name="Silva D."/>
            <person name="Sinclair B."/>
            <person name="Sperling S."/>
            <person name="Stupka E."/>
            <person name="Sugiura K."/>
            <person name="Sultana R."/>
            <person name="Takenaka Y."/>
            <person name="Taki K."/>
            <person name="Tammoja K."/>
            <person name="Tan S.L."/>
            <person name="Tang S."/>
            <person name="Taylor M.S."/>
            <person name="Tegner J."/>
            <person name="Teichmann S.A."/>
            <person name="Ueda H.R."/>
            <person name="van Nimwegen E."/>
            <person name="Verardo R."/>
            <person name="Wei C.L."/>
            <person name="Yagi K."/>
            <person name="Yamanishi H."/>
            <person name="Zabarovsky E."/>
            <person name="Zhu S."/>
            <person name="Zimmer A."/>
            <person name="Hide W."/>
            <person name="Bult C."/>
            <person name="Grimmond S.M."/>
            <person name="Teasdale R.D."/>
            <person name="Liu E.T."/>
            <person name="Brusic V."/>
            <person name="Quackenbush J."/>
            <person name="Wahlestedt C."/>
            <person name="Mattick J.S."/>
            <person name="Hume D.A."/>
            <person name="Kai C."/>
            <person name="Sasaki D."/>
            <person name="Tomaru Y."/>
            <person name="Fukuda S."/>
            <person name="Kanamori-Katayama M."/>
            <person name="Suzuki M."/>
            <person name="Aoki J."/>
            <person name="Arakawa T."/>
            <person name="Iida J."/>
            <person name="Imamura K."/>
            <person name="Itoh M."/>
            <person name="Kato T."/>
            <person name="Kawaji H."/>
            <person name="Kawagashira N."/>
            <person name="Kawashima T."/>
            <person name="Kojima M."/>
            <person name="Kondo S."/>
            <person name="Konno H."/>
            <person name="Nakano K."/>
            <person name="Ninomiya N."/>
            <person name="Nishio T."/>
            <person name="Okada M."/>
            <person name="Plessy C."/>
            <person name="Shibata K."/>
            <person name="Shiraki T."/>
            <person name="Suzuki S."/>
            <person name="Tagami M."/>
            <person name="Waki K."/>
            <person name="Watahiki A."/>
            <person name="Okamura-Oho Y."/>
            <person name="Suzuki H."/>
            <person name="Kawai J."/>
            <person name="Hayashizaki Y."/>
        </authorList>
    </citation>
    <scope>NUCLEOTIDE SEQUENCE [LARGE SCALE MRNA] (ISOFORMS 1 AND 2)</scope>
    <source>
        <strain>C57BL/6J</strain>
        <tissue>Corpora quadrigemina</tissue>
        <tissue>Diencephalon</tissue>
        <tissue>Embryo</tissue>
        <tissue>Embryonic ganglion</tissue>
        <tissue>Skin</tissue>
    </source>
</reference>
<reference key="3">
    <citation type="journal article" date="2004" name="Genome Res.">
        <title>The status, quality, and expansion of the NIH full-length cDNA project: the Mammalian Gene Collection (MGC).</title>
        <authorList>
            <consortium name="The MGC Project Team"/>
        </authorList>
    </citation>
    <scope>NUCLEOTIDE SEQUENCE [LARGE SCALE MRNA] (ISOFORM 1)</scope>
    <source>
        <strain>C57BL/6J</strain>
        <tissue>Brain</tissue>
    </source>
</reference>
<reference key="4">
    <citation type="journal article" date="2010" name="Cell">
        <title>A tissue-specific atlas of mouse protein phosphorylation and expression.</title>
        <authorList>
            <person name="Huttlin E.L."/>
            <person name="Jedrychowski M.P."/>
            <person name="Elias J.E."/>
            <person name="Goswami T."/>
            <person name="Rad R."/>
            <person name="Beausoleil S.A."/>
            <person name="Villen J."/>
            <person name="Haas W."/>
            <person name="Sowa M.E."/>
            <person name="Gygi S.P."/>
        </authorList>
    </citation>
    <scope>PHOSPHORYLATION [LARGE SCALE ANALYSIS] AT THR-110; SER-121 AND SER-122</scope>
    <scope>IDENTIFICATION BY MASS SPECTROMETRY [LARGE SCALE ANALYSIS]</scope>
    <source>
        <tissue>Brain</tissue>
        <tissue>Brown adipose tissue</tissue>
        <tissue>Heart</tissue>
        <tissue>Kidney</tissue>
        <tissue>Lung</tissue>
        <tissue>Spleen</tissue>
        <tissue>Testis</tissue>
    </source>
</reference>
<reference key="5">
    <citation type="journal article" date="2005" name="Protein Sci.">
        <title>Solution structure of the PWWP domain of the hepatoma-derived growth factor family.</title>
        <authorList>
            <person name="Nameki N."/>
            <person name="Tochio N."/>
            <person name="Koshiba S."/>
            <person name="Inoue M."/>
            <person name="Yabuki T."/>
            <person name="Aoki M."/>
            <person name="Seki E."/>
            <person name="Matsuda T."/>
            <person name="Fujikura Y."/>
            <person name="Saito M."/>
            <person name="Ikari M."/>
            <person name="Watanabe M."/>
            <person name="Terada T."/>
            <person name="Shirouzu M."/>
            <person name="Yoshida M."/>
            <person name="Hirota H."/>
            <person name="Tanaka A."/>
            <person name="Hayashizaki Y."/>
            <person name="Guntert P."/>
            <person name="Kigawa T."/>
            <person name="Yokoyama S."/>
        </authorList>
    </citation>
    <scope>STRUCTURE BY NMR OF 8-90</scope>
</reference>
<protein>
    <recommendedName>
        <fullName>Hepatoma-derived growth factor-related protein 3</fullName>
        <shortName>HRP-3</shortName>
    </recommendedName>
</protein>
<keyword id="KW-0002">3D-structure</keyword>
<keyword id="KW-0025">Alternative splicing</keyword>
<keyword id="KW-0339">Growth factor</keyword>
<keyword id="KW-0539">Nucleus</keyword>
<keyword id="KW-0597">Phosphoprotein</keyword>
<keyword id="KW-1185">Reference proteome</keyword>
<organism>
    <name type="scientific">Mus musculus</name>
    <name type="common">Mouse</name>
    <dbReference type="NCBI Taxonomy" id="10090"/>
    <lineage>
        <taxon>Eukaryota</taxon>
        <taxon>Metazoa</taxon>
        <taxon>Chordata</taxon>
        <taxon>Craniata</taxon>
        <taxon>Vertebrata</taxon>
        <taxon>Euteleostomi</taxon>
        <taxon>Mammalia</taxon>
        <taxon>Eutheria</taxon>
        <taxon>Euarchontoglires</taxon>
        <taxon>Glires</taxon>
        <taxon>Rodentia</taxon>
        <taxon>Myomorpha</taxon>
        <taxon>Muroidea</taxon>
        <taxon>Muridae</taxon>
        <taxon>Murinae</taxon>
        <taxon>Mus</taxon>
        <taxon>Mus</taxon>
    </lineage>
</organism>
<gene>
    <name type="primary">Hdgfl3</name>
    <name type="synonym">Hdgfrp3</name>
</gene>
<accession>Q9JMG7</accession>
<accession>Q3TRX2</accession>
<accession>Q8BQ69</accession>
<accession>Q8BR62</accession>
<accession>Q9D2M7</accession>
<evidence type="ECO:0000250" key="1"/>
<evidence type="ECO:0000250" key="2">
    <source>
        <dbReference type="UniProtKB" id="Q9Y3E1"/>
    </source>
</evidence>
<evidence type="ECO:0000255" key="3"/>
<evidence type="ECO:0000255" key="4">
    <source>
        <dbReference type="PROSITE-ProRule" id="PRU00162"/>
    </source>
</evidence>
<evidence type="ECO:0000256" key="5">
    <source>
        <dbReference type="SAM" id="MobiDB-lite"/>
    </source>
</evidence>
<evidence type="ECO:0000303" key="6">
    <source>
    </source>
</evidence>
<evidence type="ECO:0000305" key="7"/>
<evidence type="ECO:0007744" key="8">
    <source>
    </source>
</evidence>
<evidence type="ECO:0007829" key="9">
    <source>
        <dbReference type="PDB" id="1N27"/>
    </source>
</evidence>
<sequence length="202" mass="22431">MARPRPREYKAGDLVFAKMKGYPHWPARIDELPEGAVKPPANKYPIFFFGTHETAFLGPKDLFPYKEYKDKFGKSNKRKGFNEGLWEIENNPGVKFTGYQTIQQQSSSETEGEGGNTADASSEEEGDRVEDGKGKRKNEKGGSKRKKSYTSKKSSKQSRKSPGDEDDKDCKEEENKSSSEGGDAGNDTRNTTADLQKAGEGT</sequence>
<feature type="chain" id="PRO_0000191704" description="Hepatoma-derived growth factor-related protein 3">
    <location>
        <begin position="1"/>
        <end position="202"/>
    </location>
</feature>
<feature type="domain" description="PWWP" evidence="4">
    <location>
        <begin position="11"/>
        <end position="68"/>
    </location>
</feature>
<feature type="region of interest" description="Disordered" evidence="5">
    <location>
        <begin position="90"/>
        <end position="202"/>
    </location>
</feature>
<feature type="short sequence motif" description="Nuclear localization signal" evidence="3">
    <location>
        <begin position="135"/>
        <end position="147"/>
    </location>
</feature>
<feature type="compositionally biased region" description="Basic residues" evidence="5">
    <location>
        <begin position="134"/>
        <end position="159"/>
    </location>
</feature>
<feature type="compositionally biased region" description="Basic and acidic residues" evidence="5">
    <location>
        <begin position="168"/>
        <end position="177"/>
    </location>
</feature>
<feature type="modified residue" description="Phosphothreonine" evidence="8">
    <location>
        <position position="110"/>
    </location>
</feature>
<feature type="modified residue" description="Phosphoserine" evidence="8">
    <location>
        <position position="121"/>
    </location>
</feature>
<feature type="modified residue" description="Phosphoserine" evidence="8">
    <location>
        <position position="122"/>
    </location>
</feature>
<feature type="modified residue" description="Phosphoserine" evidence="2">
    <location>
        <position position="161"/>
    </location>
</feature>
<feature type="splice variant" id="VSP_014188" description="In isoform 2." evidence="6">
    <original>T</original>
    <variation>VRMC</variation>
    <location>
        <position position="202"/>
    </location>
</feature>
<feature type="sequence conflict" description="In Ref. 1; BAA90478." evidence="7" ref="1">
    <original>AG</original>
    <variation>TS</variation>
    <location>
        <begin position="198"/>
        <end position="199"/>
    </location>
</feature>
<feature type="strand" evidence="9">
    <location>
        <begin position="14"/>
        <end position="18"/>
    </location>
</feature>
<feature type="strand" evidence="9">
    <location>
        <begin position="24"/>
        <end position="29"/>
    </location>
</feature>
<feature type="strand" evidence="9">
    <location>
        <begin position="44"/>
        <end position="48"/>
    </location>
</feature>
<feature type="turn" evidence="9">
    <location>
        <begin position="49"/>
        <end position="51"/>
    </location>
</feature>
<feature type="strand" evidence="9">
    <location>
        <begin position="54"/>
        <end position="57"/>
    </location>
</feature>
<feature type="helix" evidence="9">
    <location>
        <begin position="59"/>
        <end position="61"/>
    </location>
</feature>
<feature type="strand" evidence="9">
    <location>
        <begin position="62"/>
        <end position="64"/>
    </location>
</feature>
<feature type="helix" evidence="9">
    <location>
        <begin position="65"/>
        <end position="72"/>
    </location>
</feature>
<feature type="strand" evidence="9">
    <location>
        <begin position="78"/>
        <end position="80"/>
    </location>
</feature>
<feature type="helix" evidence="9">
    <location>
        <begin position="81"/>
        <end position="89"/>
    </location>
</feature>
<name>HDGR3_MOUSE</name>
<proteinExistence type="evidence at protein level"/>